<accession>A4WCR5</accession>
<protein>
    <recommendedName>
        <fullName evidence="1">NADH-quinone oxidoreductase subunit C/D</fullName>
        <ecNumber evidence="1">7.1.1.-</ecNumber>
    </recommendedName>
    <alternativeName>
        <fullName evidence="1">NADH dehydrogenase I subunit C/D</fullName>
    </alternativeName>
    <alternativeName>
        <fullName evidence="1">NDH-1 subunit C/D</fullName>
    </alternativeName>
</protein>
<keyword id="KW-0997">Cell inner membrane</keyword>
<keyword id="KW-1003">Cell membrane</keyword>
<keyword id="KW-0472">Membrane</keyword>
<keyword id="KW-0511">Multifunctional enzyme</keyword>
<keyword id="KW-0520">NAD</keyword>
<keyword id="KW-0874">Quinone</keyword>
<keyword id="KW-1278">Translocase</keyword>
<keyword id="KW-0813">Transport</keyword>
<keyword id="KW-0830">Ubiquinone</keyword>
<reference key="1">
    <citation type="journal article" date="2010" name="PLoS Genet.">
        <title>Genome sequence of the plant growth promoting endophytic bacterium Enterobacter sp. 638.</title>
        <authorList>
            <person name="Taghavi S."/>
            <person name="van der Lelie D."/>
            <person name="Hoffman A."/>
            <person name="Zhang Y.B."/>
            <person name="Walla M.D."/>
            <person name="Vangronsveld J."/>
            <person name="Newman L."/>
            <person name="Monchy S."/>
        </authorList>
    </citation>
    <scope>NUCLEOTIDE SEQUENCE [LARGE SCALE GENOMIC DNA]</scope>
    <source>
        <strain>638</strain>
    </source>
</reference>
<dbReference type="EC" id="7.1.1.-" evidence="1"/>
<dbReference type="EMBL" id="CP000653">
    <property type="protein sequence ID" value="ABP61495.1"/>
    <property type="molecule type" value="Genomic_DNA"/>
</dbReference>
<dbReference type="SMR" id="A4WCR5"/>
<dbReference type="STRING" id="399742.Ent638_2830"/>
<dbReference type="KEGG" id="ent:Ent638_2830"/>
<dbReference type="eggNOG" id="COG0649">
    <property type="taxonomic scope" value="Bacteria"/>
</dbReference>
<dbReference type="eggNOG" id="COG0852">
    <property type="taxonomic scope" value="Bacteria"/>
</dbReference>
<dbReference type="HOGENOM" id="CLU_015134_3_2_6"/>
<dbReference type="Proteomes" id="UP000000230">
    <property type="component" value="Chromosome"/>
</dbReference>
<dbReference type="GO" id="GO:0030964">
    <property type="term" value="C:NADH dehydrogenase complex"/>
    <property type="evidence" value="ECO:0007669"/>
    <property type="project" value="InterPro"/>
</dbReference>
<dbReference type="GO" id="GO:0005886">
    <property type="term" value="C:plasma membrane"/>
    <property type="evidence" value="ECO:0007669"/>
    <property type="project" value="UniProtKB-SubCell"/>
</dbReference>
<dbReference type="GO" id="GO:0051287">
    <property type="term" value="F:NAD binding"/>
    <property type="evidence" value="ECO:0007669"/>
    <property type="project" value="InterPro"/>
</dbReference>
<dbReference type="GO" id="GO:0008137">
    <property type="term" value="F:NADH dehydrogenase (ubiquinone) activity"/>
    <property type="evidence" value="ECO:0007669"/>
    <property type="project" value="InterPro"/>
</dbReference>
<dbReference type="GO" id="GO:0050136">
    <property type="term" value="F:NADH:ubiquinone reductase (non-electrogenic) activity"/>
    <property type="evidence" value="ECO:0007669"/>
    <property type="project" value="UniProtKB-UniRule"/>
</dbReference>
<dbReference type="GO" id="GO:0048038">
    <property type="term" value="F:quinone binding"/>
    <property type="evidence" value="ECO:0007669"/>
    <property type="project" value="UniProtKB-KW"/>
</dbReference>
<dbReference type="FunFam" id="1.10.645.10:FF:000001">
    <property type="entry name" value="NADH-quinone oxidoreductase subunit C/D"/>
    <property type="match status" value="1"/>
</dbReference>
<dbReference type="FunFam" id="3.30.460.80:FF:000001">
    <property type="entry name" value="NADH-quinone oxidoreductase subunit C/D"/>
    <property type="match status" value="1"/>
</dbReference>
<dbReference type="Gene3D" id="1.10.645.10">
    <property type="entry name" value="Cytochrome-c3 Hydrogenase, chain B"/>
    <property type="match status" value="1"/>
</dbReference>
<dbReference type="Gene3D" id="3.30.460.80">
    <property type="entry name" value="NADH:ubiquinone oxidoreductase, 30kDa subunit"/>
    <property type="match status" value="1"/>
</dbReference>
<dbReference type="HAMAP" id="MF_01359">
    <property type="entry name" value="NDH1_NuoCD_1"/>
    <property type="match status" value="1"/>
</dbReference>
<dbReference type="HAMAP" id="MF_01358">
    <property type="entry name" value="NDH1_NuoD"/>
    <property type="match status" value="1"/>
</dbReference>
<dbReference type="InterPro" id="IPR010218">
    <property type="entry name" value="NADH_DH_suC"/>
</dbReference>
<dbReference type="InterPro" id="IPR023062">
    <property type="entry name" value="NADH_DH_suCD"/>
</dbReference>
<dbReference type="InterPro" id="IPR001135">
    <property type="entry name" value="NADH_Q_OxRdtase_suD"/>
</dbReference>
<dbReference type="InterPro" id="IPR037232">
    <property type="entry name" value="NADH_quin_OxRdtase_su_C/D-like"/>
</dbReference>
<dbReference type="InterPro" id="IPR001268">
    <property type="entry name" value="NADH_UbQ_OxRdtase_30kDa_su"/>
</dbReference>
<dbReference type="InterPro" id="IPR014029">
    <property type="entry name" value="NADH_UbQ_OxRdtase_49kDa_CS"/>
</dbReference>
<dbReference type="InterPro" id="IPR022885">
    <property type="entry name" value="NDH1_su_D/H"/>
</dbReference>
<dbReference type="InterPro" id="IPR029014">
    <property type="entry name" value="NiFe-Hase_large"/>
</dbReference>
<dbReference type="NCBIfam" id="TIGR01961">
    <property type="entry name" value="NuoC_fam"/>
    <property type="match status" value="1"/>
</dbReference>
<dbReference type="NCBIfam" id="TIGR01962">
    <property type="entry name" value="NuoD"/>
    <property type="match status" value="1"/>
</dbReference>
<dbReference type="NCBIfam" id="NF004739">
    <property type="entry name" value="PRK06075.1"/>
    <property type="match status" value="1"/>
</dbReference>
<dbReference type="NCBIfam" id="NF008728">
    <property type="entry name" value="PRK11742.1"/>
    <property type="match status" value="1"/>
</dbReference>
<dbReference type="PANTHER" id="PTHR11993:SF45">
    <property type="entry name" value="NADH-QUINONE OXIDOREDUCTASE SUBUNIT C_D"/>
    <property type="match status" value="1"/>
</dbReference>
<dbReference type="PANTHER" id="PTHR11993">
    <property type="entry name" value="NADH-UBIQUINONE OXIDOREDUCTASE 49 KDA SUBUNIT"/>
    <property type="match status" value="1"/>
</dbReference>
<dbReference type="Pfam" id="PF00329">
    <property type="entry name" value="Complex1_30kDa"/>
    <property type="match status" value="1"/>
</dbReference>
<dbReference type="Pfam" id="PF00346">
    <property type="entry name" value="Complex1_49kDa"/>
    <property type="match status" value="1"/>
</dbReference>
<dbReference type="SUPFAM" id="SSF56762">
    <property type="entry name" value="HydB/Nqo4-like"/>
    <property type="match status" value="1"/>
</dbReference>
<dbReference type="SUPFAM" id="SSF143243">
    <property type="entry name" value="Nqo5-like"/>
    <property type="match status" value="1"/>
</dbReference>
<dbReference type="PROSITE" id="PS00535">
    <property type="entry name" value="COMPLEX1_49K"/>
    <property type="match status" value="1"/>
</dbReference>
<organism>
    <name type="scientific">Enterobacter sp. (strain 638)</name>
    <dbReference type="NCBI Taxonomy" id="399742"/>
    <lineage>
        <taxon>Bacteria</taxon>
        <taxon>Pseudomonadati</taxon>
        <taxon>Pseudomonadota</taxon>
        <taxon>Gammaproteobacteria</taxon>
        <taxon>Enterobacterales</taxon>
        <taxon>Enterobacteriaceae</taxon>
        <taxon>Enterobacter</taxon>
    </lineage>
</organism>
<comment type="function">
    <text evidence="1">NDH-1 shuttles electrons from NADH, via FMN and iron-sulfur (Fe-S) centers, to quinones in the respiratory chain. The immediate electron acceptor for the enzyme in this species is believed to be ubiquinone. Couples the redox reaction to proton translocation (for every two electrons transferred, four hydrogen ions are translocated across the cytoplasmic membrane), and thus conserves the redox energy in a proton gradient.</text>
</comment>
<comment type="catalytic activity">
    <reaction evidence="1">
        <text>a quinone + NADH + 5 H(+)(in) = a quinol + NAD(+) + 4 H(+)(out)</text>
        <dbReference type="Rhea" id="RHEA:57888"/>
        <dbReference type="ChEBI" id="CHEBI:15378"/>
        <dbReference type="ChEBI" id="CHEBI:24646"/>
        <dbReference type="ChEBI" id="CHEBI:57540"/>
        <dbReference type="ChEBI" id="CHEBI:57945"/>
        <dbReference type="ChEBI" id="CHEBI:132124"/>
    </reaction>
</comment>
<comment type="subunit">
    <text evidence="1">NDH-1 is composed of 13 different subunits. Subunits NuoB, CD, E, F, and G constitute the peripheral sector of the complex.</text>
</comment>
<comment type="subcellular location">
    <subcellularLocation>
        <location evidence="1">Cell inner membrane</location>
        <topology evidence="1">Peripheral membrane protein</topology>
        <orientation evidence="1">Cytoplasmic side</orientation>
    </subcellularLocation>
</comment>
<comment type="similarity">
    <text evidence="1">In the N-terminal section; belongs to the complex I 30 kDa subunit family.</text>
</comment>
<comment type="similarity">
    <text evidence="1">In the C-terminal section; belongs to the complex I 49 kDa subunit family.</text>
</comment>
<sequence length="595" mass="68065">MTDLTAQAACLTRDHLDDPVIGELRNRFGPDAFTVQATRTGVPVVWVKREQLLEVGDFLKKLPKPYVMLFDLHGMDERLRTHRHGLPAADFSVFYHLISIDRNRDIMLKVALSENDMRLPTFTKLFPNANWYERETWEMFGMTFDGHPHLTRLLMPPTWTGHPLRKDYPARATEFDPFELTKAKQDLEMEALTFKPEDWGMKRSTENEDFMFLNLGPNHPSSHGAFRIILQLDGEEIVDCVPDIGYHHRGAEKMGERQSWHSYIPYTDRIEYLGGCVNEMPYVLAVEKLAGITVPDRVNVIRVMLSELFRINSHLLYISTFIQDVGAMTPVFFAFTDRQKIYDVVEAITGFRMHPAWFRIGGVAHDLPRGWDKLLRDFLDWMPKRLDSYEKAALRNTILIARSKGVAAYGAKEALDWGCTGAALRATGIDFDVRKARPYSGYENFDFEVPVGGGVSDCYTRVMLKVEELRQSLRILEQCLNNMPEGPFKADHPLTTPPPKERTLQHIETLITHFLQVSWGPVMPANESFQMIEATKGINSYYLTSDGSTMSYRTRIRTPSFAHLQQIPVAVRGSLVSDLIVHLGSIDFVMSDVDR</sequence>
<name>NUOCD_ENT38</name>
<proteinExistence type="inferred from homology"/>
<feature type="chain" id="PRO_0000358629" description="NADH-quinone oxidoreductase subunit C/D">
    <location>
        <begin position="1"/>
        <end position="595"/>
    </location>
</feature>
<feature type="region of interest" description="NADH dehydrogenase I subunit C" evidence="1">
    <location>
        <begin position="1"/>
        <end position="185"/>
    </location>
</feature>
<feature type="region of interest" description="NADH dehydrogenase I subunit D" evidence="1">
    <location>
        <begin position="209"/>
        <end position="595"/>
    </location>
</feature>
<evidence type="ECO:0000255" key="1">
    <source>
        <dbReference type="HAMAP-Rule" id="MF_01359"/>
    </source>
</evidence>
<gene>
    <name evidence="1" type="primary">nuoC</name>
    <name evidence="1" type="synonym">nuoCD</name>
    <name evidence="1" type="synonym">nuoD</name>
    <name type="ordered locus">Ent638_2830</name>
</gene>